<gene>
    <name evidence="1" type="primary">cysS</name>
    <name type="ordered locus">LBL_1872</name>
</gene>
<comment type="catalytic activity">
    <reaction evidence="1">
        <text>tRNA(Cys) + L-cysteine + ATP = L-cysteinyl-tRNA(Cys) + AMP + diphosphate</text>
        <dbReference type="Rhea" id="RHEA:17773"/>
        <dbReference type="Rhea" id="RHEA-COMP:9661"/>
        <dbReference type="Rhea" id="RHEA-COMP:9679"/>
        <dbReference type="ChEBI" id="CHEBI:30616"/>
        <dbReference type="ChEBI" id="CHEBI:33019"/>
        <dbReference type="ChEBI" id="CHEBI:35235"/>
        <dbReference type="ChEBI" id="CHEBI:78442"/>
        <dbReference type="ChEBI" id="CHEBI:78517"/>
        <dbReference type="ChEBI" id="CHEBI:456215"/>
        <dbReference type="EC" id="6.1.1.16"/>
    </reaction>
</comment>
<comment type="cofactor">
    <cofactor evidence="1">
        <name>Zn(2+)</name>
        <dbReference type="ChEBI" id="CHEBI:29105"/>
    </cofactor>
    <text evidence="1">Binds 1 zinc ion per subunit.</text>
</comment>
<comment type="subunit">
    <text evidence="1">Monomer.</text>
</comment>
<comment type="subcellular location">
    <subcellularLocation>
        <location evidence="1">Cytoplasm</location>
    </subcellularLocation>
</comment>
<comment type="similarity">
    <text evidence="1">Belongs to the class-I aminoacyl-tRNA synthetase family.</text>
</comment>
<feature type="chain" id="PRO_0000332845" description="Cysteine--tRNA ligase">
    <location>
        <begin position="1"/>
        <end position="474"/>
    </location>
</feature>
<feature type="short sequence motif" description="'HIGH' region">
    <location>
        <begin position="32"/>
        <end position="42"/>
    </location>
</feature>
<feature type="short sequence motif" description="'KMSKS' region">
    <location>
        <begin position="270"/>
        <end position="274"/>
    </location>
</feature>
<feature type="binding site" evidence="1">
    <location>
        <position position="30"/>
    </location>
    <ligand>
        <name>Zn(2+)</name>
        <dbReference type="ChEBI" id="CHEBI:29105"/>
    </ligand>
</feature>
<feature type="binding site" evidence="1">
    <location>
        <position position="212"/>
    </location>
    <ligand>
        <name>Zn(2+)</name>
        <dbReference type="ChEBI" id="CHEBI:29105"/>
    </ligand>
</feature>
<feature type="binding site" evidence="1">
    <location>
        <position position="237"/>
    </location>
    <ligand>
        <name>Zn(2+)</name>
        <dbReference type="ChEBI" id="CHEBI:29105"/>
    </ligand>
</feature>
<feature type="binding site" evidence="1">
    <location>
        <position position="241"/>
    </location>
    <ligand>
        <name>Zn(2+)</name>
        <dbReference type="ChEBI" id="CHEBI:29105"/>
    </ligand>
</feature>
<feature type="binding site" evidence="1">
    <location>
        <position position="273"/>
    </location>
    <ligand>
        <name>ATP</name>
        <dbReference type="ChEBI" id="CHEBI:30616"/>
    </ligand>
</feature>
<organism>
    <name type="scientific">Leptospira borgpetersenii serovar Hardjo-bovis (strain L550)</name>
    <dbReference type="NCBI Taxonomy" id="355276"/>
    <lineage>
        <taxon>Bacteria</taxon>
        <taxon>Pseudomonadati</taxon>
        <taxon>Spirochaetota</taxon>
        <taxon>Spirochaetia</taxon>
        <taxon>Leptospirales</taxon>
        <taxon>Leptospiraceae</taxon>
        <taxon>Leptospira</taxon>
    </lineage>
</organism>
<reference key="1">
    <citation type="journal article" date="2006" name="Proc. Natl. Acad. Sci. U.S.A.">
        <title>Genome reduction in Leptospira borgpetersenii reflects limited transmission potential.</title>
        <authorList>
            <person name="Bulach D.M."/>
            <person name="Zuerner R.L."/>
            <person name="Wilson P."/>
            <person name="Seemann T."/>
            <person name="McGrath A."/>
            <person name="Cullen P.A."/>
            <person name="Davis J."/>
            <person name="Johnson M."/>
            <person name="Kuczek E."/>
            <person name="Alt D.P."/>
            <person name="Peterson-Burch B."/>
            <person name="Coppel R.L."/>
            <person name="Rood J.I."/>
            <person name="Davies J.K."/>
            <person name="Adler B."/>
        </authorList>
    </citation>
    <scope>NUCLEOTIDE SEQUENCE [LARGE SCALE GENOMIC DNA]</scope>
    <source>
        <strain>L550</strain>
    </source>
</reference>
<name>SYC_LEPBL</name>
<keyword id="KW-0030">Aminoacyl-tRNA synthetase</keyword>
<keyword id="KW-0067">ATP-binding</keyword>
<keyword id="KW-0963">Cytoplasm</keyword>
<keyword id="KW-0436">Ligase</keyword>
<keyword id="KW-0479">Metal-binding</keyword>
<keyword id="KW-0547">Nucleotide-binding</keyword>
<keyword id="KW-0648">Protein biosynthesis</keyword>
<keyword id="KW-0862">Zinc</keyword>
<proteinExistence type="inferred from homology"/>
<dbReference type="EC" id="6.1.1.16" evidence="1"/>
<dbReference type="EMBL" id="CP000348">
    <property type="protein sequence ID" value="ABJ79309.1"/>
    <property type="molecule type" value="Genomic_DNA"/>
</dbReference>
<dbReference type="RefSeq" id="WP_011670407.1">
    <property type="nucleotide sequence ID" value="NC_008508.1"/>
</dbReference>
<dbReference type="SMR" id="Q050D6"/>
<dbReference type="KEGG" id="lbl:LBL_1872"/>
<dbReference type="HOGENOM" id="CLU_013528_0_1_12"/>
<dbReference type="GO" id="GO:0005829">
    <property type="term" value="C:cytosol"/>
    <property type="evidence" value="ECO:0007669"/>
    <property type="project" value="TreeGrafter"/>
</dbReference>
<dbReference type="GO" id="GO:0005524">
    <property type="term" value="F:ATP binding"/>
    <property type="evidence" value="ECO:0007669"/>
    <property type="project" value="UniProtKB-UniRule"/>
</dbReference>
<dbReference type="GO" id="GO:0004817">
    <property type="term" value="F:cysteine-tRNA ligase activity"/>
    <property type="evidence" value="ECO:0007669"/>
    <property type="project" value="UniProtKB-UniRule"/>
</dbReference>
<dbReference type="GO" id="GO:0008270">
    <property type="term" value="F:zinc ion binding"/>
    <property type="evidence" value="ECO:0007669"/>
    <property type="project" value="UniProtKB-UniRule"/>
</dbReference>
<dbReference type="GO" id="GO:0006423">
    <property type="term" value="P:cysteinyl-tRNA aminoacylation"/>
    <property type="evidence" value="ECO:0007669"/>
    <property type="project" value="UniProtKB-UniRule"/>
</dbReference>
<dbReference type="CDD" id="cd00672">
    <property type="entry name" value="CysRS_core"/>
    <property type="match status" value="1"/>
</dbReference>
<dbReference type="FunFam" id="3.40.50.620:FF:000130">
    <property type="entry name" value="Cysteine--tRNA ligase"/>
    <property type="match status" value="1"/>
</dbReference>
<dbReference type="Gene3D" id="1.20.120.1910">
    <property type="entry name" value="Cysteine-tRNA ligase, C-terminal anti-codon recognition domain"/>
    <property type="match status" value="1"/>
</dbReference>
<dbReference type="Gene3D" id="3.40.50.620">
    <property type="entry name" value="HUPs"/>
    <property type="match status" value="1"/>
</dbReference>
<dbReference type="HAMAP" id="MF_00041">
    <property type="entry name" value="Cys_tRNA_synth"/>
    <property type="match status" value="1"/>
</dbReference>
<dbReference type="InterPro" id="IPR015803">
    <property type="entry name" value="Cys-tRNA-ligase"/>
</dbReference>
<dbReference type="InterPro" id="IPR015273">
    <property type="entry name" value="Cys-tRNA-synt_Ia_DALR"/>
</dbReference>
<dbReference type="InterPro" id="IPR024909">
    <property type="entry name" value="Cys-tRNA/MSH_ligase"/>
</dbReference>
<dbReference type="InterPro" id="IPR056411">
    <property type="entry name" value="CysS_C"/>
</dbReference>
<dbReference type="InterPro" id="IPR014729">
    <property type="entry name" value="Rossmann-like_a/b/a_fold"/>
</dbReference>
<dbReference type="InterPro" id="IPR032678">
    <property type="entry name" value="tRNA-synt_1_cat_dom"/>
</dbReference>
<dbReference type="InterPro" id="IPR009080">
    <property type="entry name" value="tRNAsynth_Ia_anticodon-bd"/>
</dbReference>
<dbReference type="NCBIfam" id="TIGR00435">
    <property type="entry name" value="cysS"/>
    <property type="match status" value="1"/>
</dbReference>
<dbReference type="PANTHER" id="PTHR10890:SF3">
    <property type="entry name" value="CYSTEINE--TRNA LIGASE, CYTOPLASMIC"/>
    <property type="match status" value="1"/>
</dbReference>
<dbReference type="PANTHER" id="PTHR10890">
    <property type="entry name" value="CYSTEINYL-TRNA SYNTHETASE"/>
    <property type="match status" value="1"/>
</dbReference>
<dbReference type="Pfam" id="PF23493">
    <property type="entry name" value="CysS_C"/>
    <property type="match status" value="1"/>
</dbReference>
<dbReference type="Pfam" id="PF09190">
    <property type="entry name" value="DALR_2"/>
    <property type="match status" value="1"/>
</dbReference>
<dbReference type="Pfam" id="PF01406">
    <property type="entry name" value="tRNA-synt_1e"/>
    <property type="match status" value="1"/>
</dbReference>
<dbReference type="PRINTS" id="PR00983">
    <property type="entry name" value="TRNASYNTHCYS"/>
</dbReference>
<dbReference type="SMART" id="SM00840">
    <property type="entry name" value="DALR_2"/>
    <property type="match status" value="1"/>
</dbReference>
<dbReference type="SUPFAM" id="SSF47323">
    <property type="entry name" value="Anticodon-binding domain of a subclass of class I aminoacyl-tRNA synthetases"/>
    <property type="match status" value="1"/>
</dbReference>
<dbReference type="SUPFAM" id="SSF52374">
    <property type="entry name" value="Nucleotidylyl transferase"/>
    <property type="match status" value="1"/>
</dbReference>
<protein>
    <recommendedName>
        <fullName evidence="1">Cysteine--tRNA ligase</fullName>
        <ecNumber evidence="1">6.1.1.16</ecNumber>
    </recommendedName>
    <alternativeName>
        <fullName evidence="1">Cysteinyl-tRNA synthetase</fullName>
        <shortName evidence="1">CysRS</shortName>
    </alternativeName>
</protein>
<accession>Q050D6</accession>
<sequence length="474" mass="54455">MIEIQFYNSLSGKKEKFSPANPHRVTVYSCGPTVYNFAHIGNLRAFLFVDVLRRSLKLLGYGVDMTMNITDIDDKIIRDSIASQKSIQEFTTPWTEAFFEDLKTVSAEFLEHYPKATESIPEMIQIIQRLQNQGLVYEKDENLYFSIQKFEGYGKLSKIDTSGMKTGTRYDTDEYDKEDVRDFVLWKSPKRKGEASWKTSVGTGRPGWHLECSAMIRKIYGSGVDIHTGGVDLLFPHHENEIAQSEGAFPEESFVRTWLHSEHLLVEGQKMSKSKGNFYTLRDLVGQGLDPKAIRFLLISAHYRSKLNFSTDRIAEASANIRKIQNCLDRLLDIAQNVKIDPSYSFNDELTLRWKKEFEESLADDLNVSKALAVVFESLKTINAFLDSKKNRVAEISANEFIQILAYYDRIFGVLNFESQKDPLIDSEIDSLIQERQTARKNKDFARSDAIRDQLLAQGILIEDTKDGIRWRRK</sequence>
<evidence type="ECO:0000255" key="1">
    <source>
        <dbReference type="HAMAP-Rule" id="MF_00041"/>
    </source>
</evidence>